<evidence type="ECO:0000255" key="1">
    <source>
        <dbReference type="HAMAP-Rule" id="MF_01535"/>
    </source>
</evidence>
<dbReference type="EC" id="2.7.1.5" evidence="1"/>
<dbReference type="EMBL" id="AE005174">
    <property type="protein sequence ID" value="AAG59098.1"/>
    <property type="molecule type" value="Genomic_DNA"/>
</dbReference>
<dbReference type="EMBL" id="BA000007">
    <property type="protein sequence ID" value="BAB38254.1"/>
    <property type="molecule type" value="Genomic_DNA"/>
</dbReference>
<dbReference type="PIR" id="F86079">
    <property type="entry name" value="F86079"/>
</dbReference>
<dbReference type="PIR" id="G91232">
    <property type="entry name" value="G91232"/>
</dbReference>
<dbReference type="RefSeq" id="NP_312858.1">
    <property type="nucleotide sequence ID" value="NC_002695.1"/>
</dbReference>
<dbReference type="RefSeq" id="WP_000144081.1">
    <property type="nucleotide sequence ID" value="NZ_VOAI01000016.1"/>
</dbReference>
<dbReference type="SMR" id="Q8X899"/>
<dbReference type="STRING" id="155864.Z5448"/>
<dbReference type="GeneID" id="915063"/>
<dbReference type="KEGG" id="ece:Z5448"/>
<dbReference type="KEGG" id="ecs:ECs_4831"/>
<dbReference type="PATRIC" id="fig|386585.9.peg.5048"/>
<dbReference type="eggNOG" id="COG1070">
    <property type="taxonomic scope" value="Bacteria"/>
</dbReference>
<dbReference type="HOGENOM" id="CLU_039395_0_0_6"/>
<dbReference type="OMA" id="HYRDART"/>
<dbReference type="UniPathway" id="UPA00541">
    <property type="reaction ID" value="UER00602"/>
</dbReference>
<dbReference type="Proteomes" id="UP000000558">
    <property type="component" value="Chromosome"/>
</dbReference>
<dbReference type="Proteomes" id="UP000002519">
    <property type="component" value="Chromosome"/>
</dbReference>
<dbReference type="GO" id="GO:0005829">
    <property type="term" value="C:cytosol"/>
    <property type="evidence" value="ECO:0007669"/>
    <property type="project" value="TreeGrafter"/>
</dbReference>
<dbReference type="GO" id="GO:0005524">
    <property type="term" value="F:ATP binding"/>
    <property type="evidence" value="ECO:0007669"/>
    <property type="project" value="UniProtKB-KW"/>
</dbReference>
<dbReference type="GO" id="GO:0004370">
    <property type="term" value="F:glycerol kinase activity"/>
    <property type="evidence" value="ECO:0007669"/>
    <property type="project" value="TreeGrafter"/>
</dbReference>
<dbReference type="GO" id="GO:0008993">
    <property type="term" value="F:rhamnulokinase activity"/>
    <property type="evidence" value="ECO:0007669"/>
    <property type="project" value="UniProtKB-UniRule"/>
</dbReference>
<dbReference type="GO" id="GO:0006071">
    <property type="term" value="P:glycerol metabolic process"/>
    <property type="evidence" value="ECO:0007669"/>
    <property type="project" value="TreeGrafter"/>
</dbReference>
<dbReference type="GO" id="GO:0019301">
    <property type="term" value="P:rhamnose catabolic process"/>
    <property type="evidence" value="ECO:0007669"/>
    <property type="project" value="UniProtKB-UniRule"/>
</dbReference>
<dbReference type="CDD" id="cd07771">
    <property type="entry name" value="ASKHA_NBD_FGGY_RhaB-like"/>
    <property type="match status" value="1"/>
</dbReference>
<dbReference type="FunFam" id="3.30.420.40:FF:000064">
    <property type="entry name" value="Rhamnulokinase"/>
    <property type="match status" value="1"/>
</dbReference>
<dbReference type="FunFam" id="3.30.420.40:FF:000073">
    <property type="entry name" value="Rhamnulokinase"/>
    <property type="match status" value="1"/>
</dbReference>
<dbReference type="Gene3D" id="3.30.420.40">
    <property type="match status" value="2"/>
</dbReference>
<dbReference type="HAMAP" id="MF_01535">
    <property type="entry name" value="Rhamnulokinase"/>
    <property type="match status" value="1"/>
</dbReference>
<dbReference type="InterPro" id="IPR043129">
    <property type="entry name" value="ATPase_NBD"/>
</dbReference>
<dbReference type="InterPro" id="IPR018485">
    <property type="entry name" value="FGGY_C"/>
</dbReference>
<dbReference type="InterPro" id="IPR018484">
    <property type="entry name" value="FGGY_N"/>
</dbReference>
<dbReference type="InterPro" id="IPR013449">
    <property type="entry name" value="Rhamnulokinase"/>
</dbReference>
<dbReference type="NCBIfam" id="NF007925">
    <property type="entry name" value="PRK10640.1"/>
    <property type="match status" value="1"/>
</dbReference>
<dbReference type="NCBIfam" id="TIGR02627">
    <property type="entry name" value="rhamnulo_kin"/>
    <property type="match status" value="1"/>
</dbReference>
<dbReference type="PANTHER" id="PTHR10196:SF93">
    <property type="entry name" value="L-RHAMNULOKINASE"/>
    <property type="match status" value="1"/>
</dbReference>
<dbReference type="PANTHER" id="PTHR10196">
    <property type="entry name" value="SUGAR KINASE"/>
    <property type="match status" value="1"/>
</dbReference>
<dbReference type="Pfam" id="PF02782">
    <property type="entry name" value="FGGY_C"/>
    <property type="match status" value="1"/>
</dbReference>
<dbReference type="Pfam" id="PF00370">
    <property type="entry name" value="FGGY_N"/>
    <property type="match status" value="1"/>
</dbReference>
<dbReference type="SUPFAM" id="SSF53067">
    <property type="entry name" value="Actin-like ATPase domain"/>
    <property type="match status" value="2"/>
</dbReference>
<keyword id="KW-0067">ATP-binding</keyword>
<keyword id="KW-1015">Disulfide bond</keyword>
<keyword id="KW-0418">Kinase</keyword>
<keyword id="KW-0460">Magnesium</keyword>
<keyword id="KW-0547">Nucleotide-binding</keyword>
<keyword id="KW-1185">Reference proteome</keyword>
<keyword id="KW-0684">Rhamnose metabolism</keyword>
<keyword id="KW-0808">Transferase</keyword>
<proteinExistence type="inferred from homology"/>
<feature type="chain" id="PRO_0000090533" description="Rhamnulokinase">
    <location>
        <begin position="1"/>
        <end position="489"/>
    </location>
</feature>
<feature type="active site" description="Proton acceptor" evidence="1">
    <location>
        <position position="237"/>
    </location>
</feature>
<feature type="binding site" evidence="1">
    <location>
        <begin position="13"/>
        <end position="17"/>
    </location>
    <ligand>
        <name>ATP</name>
        <dbReference type="ChEBI" id="CHEBI:30616"/>
    </ligand>
</feature>
<feature type="binding site" evidence="1">
    <location>
        <position position="83"/>
    </location>
    <ligand>
        <name>substrate</name>
    </ligand>
</feature>
<feature type="binding site" evidence="1">
    <location>
        <begin position="236"/>
        <end position="238"/>
    </location>
    <ligand>
        <name>substrate</name>
    </ligand>
</feature>
<feature type="binding site" evidence="1">
    <location>
        <position position="259"/>
    </location>
    <ligand>
        <name>ATP</name>
        <dbReference type="ChEBI" id="CHEBI:30616"/>
    </ligand>
</feature>
<feature type="binding site" evidence="1">
    <location>
        <position position="296"/>
    </location>
    <ligand>
        <name>substrate</name>
    </ligand>
</feature>
<feature type="binding site" evidence="1">
    <location>
        <position position="304"/>
    </location>
    <ligand>
        <name>ATP</name>
        <dbReference type="ChEBI" id="CHEBI:30616"/>
    </ligand>
</feature>
<feature type="binding site" evidence="1">
    <location>
        <position position="402"/>
    </location>
    <ligand>
        <name>ATP</name>
        <dbReference type="ChEBI" id="CHEBI:30616"/>
    </ligand>
</feature>
<feature type="disulfide bond" evidence="1">
    <location>
        <begin position="68"/>
        <end position="222"/>
    </location>
</feature>
<feature type="disulfide bond" evidence="1">
    <location>
        <begin position="353"/>
        <end position="370"/>
    </location>
</feature>
<feature type="disulfide bond" evidence="1">
    <location>
        <begin position="413"/>
        <end position="417"/>
    </location>
</feature>
<gene>
    <name evidence="1" type="primary">rhaB</name>
    <name type="ordered locus">Z5448</name>
    <name type="ordered locus">ECs4831</name>
</gene>
<comment type="function">
    <text evidence="1">Involved in the catabolism of L-rhamnose (6-deoxy-L-mannose). Catalyzes the transfer of the gamma-phosphate group from ATP to the 1-hydroxyl group of L-rhamnulose to yield L-rhamnulose 1-phosphate.</text>
</comment>
<comment type="catalytic activity">
    <reaction evidence="1">
        <text>L-rhamnulose + ATP = L-rhamnulose 1-phosphate + ADP + H(+)</text>
        <dbReference type="Rhea" id="RHEA:20117"/>
        <dbReference type="ChEBI" id="CHEBI:15378"/>
        <dbReference type="ChEBI" id="CHEBI:17897"/>
        <dbReference type="ChEBI" id="CHEBI:30616"/>
        <dbReference type="ChEBI" id="CHEBI:58313"/>
        <dbReference type="ChEBI" id="CHEBI:456216"/>
        <dbReference type="EC" id="2.7.1.5"/>
    </reaction>
</comment>
<comment type="cofactor">
    <cofactor evidence="1">
        <name>Mg(2+)</name>
        <dbReference type="ChEBI" id="CHEBI:18420"/>
    </cofactor>
</comment>
<comment type="pathway">
    <text evidence="1">Carbohydrate degradation; L-rhamnose degradation; glycerone phosphate from L-rhamnose: step 2/3.</text>
</comment>
<comment type="subunit">
    <text evidence="1">Monomer.</text>
</comment>
<comment type="similarity">
    <text evidence="1">Belongs to the rhamnulokinase family.</text>
</comment>
<accession>Q8X899</accession>
<accession>Q7A997</accession>
<reference key="1">
    <citation type="journal article" date="2001" name="Nature">
        <title>Genome sequence of enterohaemorrhagic Escherichia coli O157:H7.</title>
        <authorList>
            <person name="Perna N.T."/>
            <person name="Plunkett G. III"/>
            <person name="Burland V."/>
            <person name="Mau B."/>
            <person name="Glasner J.D."/>
            <person name="Rose D.J."/>
            <person name="Mayhew G.F."/>
            <person name="Evans P.S."/>
            <person name="Gregor J."/>
            <person name="Kirkpatrick H.A."/>
            <person name="Posfai G."/>
            <person name="Hackett J."/>
            <person name="Klink S."/>
            <person name="Boutin A."/>
            <person name="Shao Y."/>
            <person name="Miller L."/>
            <person name="Grotbeck E.J."/>
            <person name="Davis N.W."/>
            <person name="Lim A."/>
            <person name="Dimalanta E.T."/>
            <person name="Potamousis K."/>
            <person name="Apodaca J."/>
            <person name="Anantharaman T.S."/>
            <person name="Lin J."/>
            <person name="Yen G."/>
            <person name="Schwartz D.C."/>
            <person name="Welch R.A."/>
            <person name="Blattner F.R."/>
        </authorList>
    </citation>
    <scope>NUCLEOTIDE SEQUENCE [LARGE SCALE GENOMIC DNA]</scope>
    <source>
        <strain>O157:H7 / EDL933 / ATCC 700927 / EHEC</strain>
    </source>
</reference>
<reference key="2">
    <citation type="journal article" date="2001" name="DNA Res.">
        <title>Complete genome sequence of enterohemorrhagic Escherichia coli O157:H7 and genomic comparison with a laboratory strain K-12.</title>
        <authorList>
            <person name="Hayashi T."/>
            <person name="Makino K."/>
            <person name="Ohnishi M."/>
            <person name="Kurokawa K."/>
            <person name="Ishii K."/>
            <person name="Yokoyama K."/>
            <person name="Han C.-G."/>
            <person name="Ohtsubo E."/>
            <person name="Nakayama K."/>
            <person name="Murata T."/>
            <person name="Tanaka M."/>
            <person name="Tobe T."/>
            <person name="Iida T."/>
            <person name="Takami H."/>
            <person name="Honda T."/>
            <person name="Sasakawa C."/>
            <person name="Ogasawara N."/>
            <person name="Yasunaga T."/>
            <person name="Kuhara S."/>
            <person name="Shiba T."/>
            <person name="Hattori M."/>
            <person name="Shinagawa H."/>
        </authorList>
    </citation>
    <scope>NUCLEOTIDE SEQUENCE [LARGE SCALE GENOMIC DNA]</scope>
    <source>
        <strain>O157:H7 / Sakai / RIMD 0509952 / EHEC</strain>
    </source>
</reference>
<protein>
    <recommendedName>
        <fullName evidence="1">Rhamnulokinase</fullName>
        <shortName evidence="1">RhaB</shortName>
        <ecNumber evidence="1">2.7.1.5</ecNumber>
    </recommendedName>
    <alternativeName>
        <fullName evidence="1">ATP:L-rhamnulose phosphotransferase</fullName>
    </alternativeName>
    <alternativeName>
        <fullName evidence="1">L-rhamnulose 1-kinase</fullName>
    </alternativeName>
    <alternativeName>
        <fullName evidence="1">Rhamnulose kinase</fullName>
    </alternativeName>
</protein>
<sequence>MTFRNCVAVDLGASSGRVMLARYERECRSLTLREIHRFNNGLHSQNGYVTWDVDSLESAIRLGLNKVCEEGIRIDSIGIDTWGVDFVLLDQQGQRVGLPVAYRDSRTNGLMAQAQQQLGKRDIYQRSGIQFLPFNTLYQLRALTEQQPELIPHIAHALLMPDYFSYRLTGKMNWEYTNATTTQLVNINSDDWDESLLAWSGANKAWFGRPTHPGNVIGHWICPQGNEIPVVAVASHDTASAVIASPLNGSRAAYLSSGTWSLMGFESQTPFTNDTALAANITNEGGAEGRYRVLKNIMGLWLLQRVLQERQINDLPALISATQALPACRFIINPNDDRFINPETMCSEIQAACRETAQPIPESDAELARCIFDSLALLYADVLHELAQLRGEDFSQLHIVGGGCQNTLLNQLCADACGIRVIAGPVEASTLGNIGIQLMTLDELNNVDDFRQVVSTTANLTTFTPNPDSEIAHYVARIHSTRQTKELCA</sequence>
<organism>
    <name type="scientific">Escherichia coli O157:H7</name>
    <dbReference type="NCBI Taxonomy" id="83334"/>
    <lineage>
        <taxon>Bacteria</taxon>
        <taxon>Pseudomonadati</taxon>
        <taxon>Pseudomonadota</taxon>
        <taxon>Gammaproteobacteria</taxon>
        <taxon>Enterobacterales</taxon>
        <taxon>Enterobacteriaceae</taxon>
        <taxon>Escherichia</taxon>
    </lineage>
</organism>
<name>RHAB_ECO57</name>